<proteinExistence type="evidence at protein level"/>
<feature type="initiator methionine" description="Removed">
    <location>
        <position position="1"/>
    </location>
</feature>
<feature type="chain" id="PRO_0000442997" description="Actin, alpha cardiac muscle 1, intermediate form" evidence="1">
    <location>
        <begin position="2"/>
        <end position="377"/>
    </location>
</feature>
<feature type="chain" id="PRO_0000258915" description="Actin, alpha cardiac muscle 1" evidence="5">
    <location>
        <begin position="3"/>
        <end position="377"/>
    </location>
</feature>
<feature type="modified residue" description="N-acetylcysteine; in intermediate form" evidence="1">
    <location>
        <position position="2"/>
    </location>
</feature>
<feature type="modified residue" description="Methionine (R)-sulfoxide" evidence="4">
    <location>
        <position position="46"/>
    </location>
</feature>
<feature type="modified residue" description="Methionine (R)-sulfoxide" evidence="4">
    <location>
        <position position="49"/>
    </location>
</feature>
<feature type="modified residue" description="Tele-methylhistidine" evidence="2">
    <location>
        <position position="75"/>
    </location>
</feature>
<feature type="modified residue" description="N6-methyllysine" evidence="3">
    <location>
        <position position="86"/>
    </location>
</feature>
<feature type="turn" evidence="8">
    <location>
        <begin position="5"/>
        <end position="7"/>
    </location>
</feature>
<feature type="strand" evidence="8">
    <location>
        <begin position="10"/>
        <end position="13"/>
    </location>
</feature>
<feature type="strand" evidence="8">
    <location>
        <begin position="19"/>
        <end position="23"/>
    </location>
</feature>
<feature type="strand" evidence="8">
    <location>
        <begin position="30"/>
        <end position="33"/>
    </location>
</feature>
<feature type="strand" evidence="8">
    <location>
        <begin position="37"/>
        <end position="40"/>
    </location>
</feature>
<feature type="helix" evidence="8">
    <location>
        <begin position="58"/>
        <end position="62"/>
    </location>
</feature>
<feature type="turn" evidence="8">
    <location>
        <begin position="63"/>
        <end position="66"/>
    </location>
</feature>
<feature type="strand" evidence="8">
    <location>
        <begin position="67"/>
        <end position="70"/>
    </location>
</feature>
<feature type="strand" evidence="8">
    <location>
        <begin position="72"/>
        <end position="74"/>
    </location>
</feature>
<feature type="helix" evidence="8">
    <location>
        <begin position="81"/>
        <end position="93"/>
    </location>
</feature>
<feature type="helix" evidence="8">
    <location>
        <begin position="100"/>
        <end position="102"/>
    </location>
</feature>
<feature type="strand" evidence="8">
    <location>
        <begin position="105"/>
        <end position="109"/>
    </location>
</feature>
<feature type="helix" evidence="8">
    <location>
        <begin position="115"/>
        <end position="127"/>
    </location>
</feature>
<feature type="strand" evidence="8">
    <location>
        <begin position="132"/>
        <end position="138"/>
    </location>
</feature>
<feature type="helix" evidence="8">
    <location>
        <begin position="139"/>
        <end position="146"/>
    </location>
</feature>
<feature type="strand" evidence="8">
    <location>
        <begin position="150"/>
        <end position="157"/>
    </location>
</feature>
<feature type="strand" evidence="8">
    <location>
        <begin position="162"/>
        <end position="168"/>
    </location>
</feature>
<feature type="helix" evidence="8">
    <location>
        <begin position="174"/>
        <end position="176"/>
    </location>
</feature>
<feature type="strand" evidence="8">
    <location>
        <begin position="178"/>
        <end position="180"/>
    </location>
</feature>
<feature type="helix" evidence="8">
    <location>
        <begin position="184"/>
        <end position="195"/>
    </location>
</feature>
<feature type="helix" evidence="8">
    <location>
        <begin position="196"/>
        <end position="198"/>
    </location>
</feature>
<feature type="helix" evidence="8">
    <location>
        <begin position="205"/>
        <end position="207"/>
    </location>
</feature>
<feature type="helix" evidence="8">
    <location>
        <begin position="208"/>
        <end position="218"/>
    </location>
</feature>
<feature type="helix" evidence="8">
    <location>
        <begin position="226"/>
        <end position="234"/>
    </location>
</feature>
<feature type="strand" evidence="8">
    <location>
        <begin position="240"/>
        <end position="244"/>
    </location>
</feature>
<feature type="strand" evidence="8">
    <location>
        <begin position="247"/>
        <end position="252"/>
    </location>
</feature>
<feature type="helix" evidence="8">
    <location>
        <begin position="254"/>
        <end position="256"/>
    </location>
</feature>
<feature type="turn" evidence="8">
    <location>
        <begin position="257"/>
        <end position="259"/>
    </location>
</feature>
<feature type="helix" evidence="8">
    <location>
        <begin position="260"/>
        <end position="263"/>
    </location>
</feature>
<feature type="turn" evidence="8">
    <location>
        <begin position="266"/>
        <end position="270"/>
    </location>
</feature>
<feature type="helix" evidence="8">
    <location>
        <begin position="276"/>
        <end position="285"/>
    </location>
</feature>
<feature type="helix" evidence="8">
    <location>
        <begin position="292"/>
        <end position="296"/>
    </location>
</feature>
<feature type="strand" evidence="8">
    <location>
        <begin position="299"/>
        <end position="303"/>
    </location>
</feature>
<feature type="helix" evidence="8">
    <location>
        <begin position="304"/>
        <end position="306"/>
    </location>
</feature>
<feature type="helix" evidence="8">
    <location>
        <begin position="311"/>
        <end position="322"/>
    </location>
</feature>
<feature type="helix" evidence="8">
    <location>
        <begin position="340"/>
        <end position="348"/>
    </location>
</feature>
<feature type="helix" evidence="8">
    <location>
        <begin position="352"/>
        <end position="356"/>
    </location>
</feature>
<feature type="helix" evidence="8">
    <location>
        <begin position="361"/>
        <end position="367"/>
    </location>
</feature>
<feature type="helix" evidence="8">
    <location>
        <begin position="369"/>
        <end position="373"/>
    </location>
</feature>
<accession>Q3ZC07</accession>
<reference key="1">
    <citation type="submission" date="2005-08" db="EMBL/GenBank/DDBJ databases">
        <authorList>
            <consortium name="NIH - Mammalian Gene Collection (MGC) project"/>
        </authorList>
    </citation>
    <scope>NUCLEOTIDE SEQUENCE [LARGE SCALE MRNA]</scope>
    <source>
        <strain>Hereford</strain>
        <tissue>Heart ventricle</tissue>
    </source>
</reference>
<sequence>MCDDEETTALVCDNGSGLVKAGFAGDDAPRAVFPSIVGRPRHQGVMVGMGQKDSYVGDEAQSKRGILTLKYPIEHGIITNWDDMEKIWHHTFYNELRVAPEEHPTLLTEAPLNPKANREKMTQIMFETFNVPAMYVAIQAVLSLYASGRTTGIVLDSGDGVTHNVPIYEGYALPHAIMRLDLAGRDLTDYLMKILTERGYSFVTTAEREIVRDIKEKLCYVALDFENEMATAASSSSLEKSYELPDGQVITIGNERFRCPETLFQPSFIGMESAGIHETTYNSIMKCDIDIRKDLYANNVLSGGTTMYPGIADRMQKEITALAPSTMKIKIIAPPERKYSVWIGGSILASLSTFQQMWISKQEYDEAGPSIVHRKCF</sequence>
<protein>
    <recommendedName>
        <fullName>Actin, alpha cardiac muscle 1</fullName>
        <ecNumber evidence="6">3.6.4.-</ecNumber>
    </recommendedName>
    <alternativeName>
        <fullName>Alpha-cardiac actin</fullName>
    </alternativeName>
    <component>
        <recommendedName>
            <fullName>Actin, alpha cardiac muscle 1, intermediate form</fullName>
        </recommendedName>
    </component>
</protein>
<dbReference type="EC" id="3.6.4.-" evidence="6"/>
<dbReference type="EMBL" id="BC102992">
    <property type="protein sequence ID" value="AAI02993.1"/>
    <property type="molecule type" value="mRNA"/>
</dbReference>
<dbReference type="RefSeq" id="NP_001029757.1">
    <property type="nucleotide sequence ID" value="NM_001034585.2"/>
</dbReference>
<dbReference type="PDB" id="8DMY">
    <property type="method" value="EM"/>
    <property type="resolution" value="3.07 A"/>
    <property type="chains" value="A/B/C/D=4-377"/>
</dbReference>
<dbReference type="PDBsum" id="8DMY"/>
<dbReference type="EMDB" id="EMD-27549"/>
<dbReference type="SMR" id="Q3ZC07"/>
<dbReference type="DIP" id="DIP-48625N"/>
<dbReference type="FunCoup" id="Q3ZC07">
    <property type="interactions" value="412"/>
</dbReference>
<dbReference type="IntAct" id="Q3ZC07">
    <property type="interactions" value="2"/>
</dbReference>
<dbReference type="PaxDb" id="9913-ENSBTAP00000007504"/>
<dbReference type="PeptideAtlas" id="Q3ZC07"/>
<dbReference type="Ensembl" id="ENSBTAT00000007504.6">
    <property type="protein sequence ID" value="ENSBTAP00000007504.5"/>
    <property type="gene ID" value="ENSBTAG00000005714.7"/>
</dbReference>
<dbReference type="GeneID" id="533219"/>
<dbReference type="KEGG" id="bta:533219"/>
<dbReference type="CTD" id="70"/>
<dbReference type="VEuPathDB" id="HostDB:ENSBTAG00000005714"/>
<dbReference type="VGNC" id="VGNC:25574">
    <property type="gene designation" value="ACTC1"/>
</dbReference>
<dbReference type="eggNOG" id="KOG0676">
    <property type="taxonomic scope" value="Eukaryota"/>
</dbReference>
<dbReference type="GeneTree" id="ENSGT00940000154710"/>
<dbReference type="HOGENOM" id="CLU_027965_0_2_1"/>
<dbReference type="InParanoid" id="Q3ZC07"/>
<dbReference type="OMA" id="FTTSAEF"/>
<dbReference type="OrthoDB" id="9971293at2759"/>
<dbReference type="TreeFam" id="TF354237"/>
<dbReference type="Reactome" id="R-BTA-390522">
    <property type="pathway name" value="Striated Muscle Contraction"/>
</dbReference>
<dbReference type="Reactome" id="R-BTA-8980692">
    <property type="pathway name" value="RHOA GTPase cycle"/>
</dbReference>
<dbReference type="Reactome" id="R-BTA-9913351">
    <property type="pathway name" value="Formation of the dystrophin-glycoprotein complex (DGC)"/>
</dbReference>
<dbReference type="Proteomes" id="UP000009136">
    <property type="component" value="Chromosome 10"/>
</dbReference>
<dbReference type="Bgee" id="ENSBTAG00000005714">
    <property type="expression patterns" value="Expressed in cardiac atrium and 84 other cell types or tissues"/>
</dbReference>
<dbReference type="GO" id="GO:0015629">
    <property type="term" value="C:actin cytoskeleton"/>
    <property type="evidence" value="ECO:0000318"/>
    <property type="project" value="GO_Central"/>
</dbReference>
<dbReference type="GO" id="GO:0005884">
    <property type="term" value="C:actin filament"/>
    <property type="evidence" value="ECO:0000318"/>
    <property type="project" value="GO_Central"/>
</dbReference>
<dbReference type="GO" id="GO:0044297">
    <property type="term" value="C:cell body"/>
    <property type="evidence" value="ECO:0000250"/>
    <property type="project" value="AgBase"/>
</dbReference>
<dbReference type="GO" id="GO:0005737">
    <property type="term" value="C:cytoplasm"/>
    <property type="evidence" value="ECO:0000250"/>
    <property type="project" value="AgBase"/>
</dbReference>
<dbReference type="GO" id="GO:0030175">
    <property type="term" value="C:filopodium"/>
    <property type="evidence" value="ECO:0000250"/>
    <property type="project" value="AgBase"/>
</dbReference>
<dbReference type="GO" id="GO:0098978">
    <property type="term" value="C:glutamatergic synapse"/>
    <property type="evidence" value="ECO:0007669"/>
    <property type="project" value="Ensembl"/>
</dbReference>
<dbReference type="GO" id="GO:0031674">
    <property type="term" value="C:I band"/>
    <property type="evidence" value="ECO:0007669"/>
    <property type="project" value="Ensembl"/>
</dbReference>
<dbReference type="GO" id="GO:0030027">
    <property type="term" value="C:lamellipodium"/>
    <property type="evidence" value="ECO:0000250"/>
    <property type="project" value="AgBase"/>
</dbReference>
<dbReference type="GO" id="GO:0030017">
    <property type="term" value="C:sarcomere"/>
    <property type="evidence" value="ECO:0000318"/>
    <property type="project" value="GO_Central"/>
</dbReference>
<dbReference type="GO" id="GO:0005524">
    <property type="term" value="F:ATP binding"/>
    <property type="evidence" value="ECO:0007669"/>
    <property type="project" value="UniProtKB-KW"/>
</dbReference>
<dbReference type="GO" id="GO:0016787">
    <property type="term" value="F:hydrolase activity"/>
    <property type="evidence" value="ECO:0007669"/>
    <property type="project" value="UniProtKB-KW"/>
</dbReference>
<dbReference type="GO" id="GO:0017022">
    <property type="term" value="F:myosin binding"/>
    <property type="evidence" value="ECO:0000318"/>
    <property type="project" value="GO_Central"/>
</dbReference>
<dbReference type="GO" id="GO:0007015">
    <property type="term" value="P:actin filament organization"/>
    <property type="evidence" value="ECO:0000318"/>
    <property type="project" value="GO_Central"/>
</dbReference>
<dbReference type="GO" id="GO:0033275">
    <property type="term" value="P:actin-myosin filament sliding"/>
    <property type="evidence" value="ECO:0000318"/>
    <property type="project" value="GO_Central"/>
</dbReference>
<dbReference type="GO" id="GO:0055008">
    <property type="term" value="P:cardiac muscle tissue morphogenesis"/>
    <property type="evidence" value="ECO:0007669"/>
    <property type="project" value="Ensembl"/>
</dbReference>
<dbReference type="GO" id="GO:0055003">
    <property type="term" value="P:cardiac myofibril assembly"/>
    <property type="evidence" value="ECO:0007669"/>
    <property type="project" value="Ensembl"/>
</dbReference>
<dbReference type="GO" id="GO:0060047">
    <property type="term" value="P:heart contraction"/>
    <property type="evidence" value="ECO:0000318"/>
    <property type="project" value="GO_Central"/>
</dbReference>
<dbReference type="GO" id="GO:0090131">
    <property type="term" value="P:mesenchyme migration"/>
    <property type="evidence" value="ECO:0000250"/>
    <property type="project" value="AgBase"/>
</dbReference>
<dbReference type="GO" id="GO:0043066">
    <property type="term" value="P:negative regulation of apoptotic process"/>
    <property type="evidence" value="ECO:0007669"/>
    <property type="project" value="Ensembl"/>
</dbReference>
<dbReference type="GO" id="GO:0010628">
    <property type="term" value="P:positive regulation of gene expression"/>
    <property type="evidence" value="ECO:0000250"/>
    <property type="project" value="AgBase"/>
</dbReference>
<dbReference type="GO" id="GO:0030240">
    <property type="term" value="P:skeletal muscle thin filament assembly"/>
    <property type="evidence" value="ECO:0007669"/>
    <property type="project" value="Ensembl"/>
</dbReference>
<dbReference type="CDD" id="cd10224">
    <property type="entry name" value="ASKHA_NBD_actin"/>
    <property type="match status" value="1"/>
</dbReference>
<dbReference type="FunFam" id="3.30.420.40:FF:000131">
    <property type="entry name" value="Actin, alpha skeletal muscle"/>
    <property type="match status" value="1"/>
</dbReference>
<dbReference type="FunFam" id="3.30.420.40:FF:000291">
    <property type="entry name" value="Actin, alpha skeletal muscle"/>
    <property type="match status" value="1"/>
</dbReference>
<dbReference type="FunFam" id="3.90.640.10:FF:000047">
    <property type="entry name" value="Actin, alpha skeletal muscle"/>
    <property type="match status" value="1"/>
</dbReference>
<dbReference type="FunFam" id="3.30.420.40:FF:000058">
    <property type="entry name" value="Putative actin-related protein 5"/>
    <property type="match status" value="1"/>
</dbReference>
<dbReference type="Gene3D" id="3.30.420.40">
    <property type="match status" value="2"/>
</dbReference>
<dbReference type="Gene3D" id="3.90.640.10">
    <property type="entry name" value="Actin, Chain A, domain 4"/>
    <property type="match status" value="1"/>
</dbReference>
<dbReference type="InterPro" id="IPR004000">
    <property type="entry name" value="Actin"/>
</dbReference>
<dbReference type="InterPro" id="IPR020902">
    <property type="entry name" value="Actin/actin-like_CS"/>
</dbReference>
<dbReference type="InterPro" id="IPR004001">
    <property type="entry name" value="Actin_CS"/>
</dbReference>
<dbReference type="InterPro" id="IPR043129">
    <property type="entry name" value="ATPase_NBD"/>
</dbReference>
<dbReference type="PANTHER" id="PTHR11937">
    <property type="entry name" value="ACTIN"/>
    <property type="match status" value="1"/>
</dbReference>
<dbReference type="Pfam" id="PF00022">
    <property type="entry name" value="Actin"/>
    <property type="match status" value="1"/>
</dbReference>
<dbReference type="PRINTS" id="PR00190">
    <property type="entry name" value="ACTIN"/>
</dbReference>
<dbReference type="SMART" id="SM00268">
    <property type="entry name" value="ACTIN"/>
    <property type="match status" value="1"/>
</dbReference>
<dbReference type="SUPFAM" id="SSF53067">
    <property type="entry name" value="Actin-like ATPase domain"/>
    <property type="match status" value="2"/>
</dbReference>
<dbReference type="PROSITE" id="PS00406">
    <property type="entry name" value="ACTINS_1"/>
    <property type="match status" value="1"/>
</dbReference>
<dbReference type="PROSITE" id="PS00432">
    <property type="entry name" value="ACTINS_2"/>
    <property type="match status" value="1"/>
</dbReference>
<dbReference type="PROSITE" id="PS01132">
    <property type="entry name" value="ACTINS_ACT_LIKE"/>
    <property type="match status" value="1"/>
</dbReference>
<name>ACTC_BOVIN</name>
<organism>
    <name type="scientific">Bos taurus</name>
    <name type="common">Bovine</name>
    <dbReference type="NCBI Taxonomy" id="9913"/>
    <lineage>
        <taxon>Eukaryota</taxon>
        <taxon>Metazoa</taxon>
        <taxon>Chordata</taxon>
        <taxon>Craniata</taxon>
        <taxon>Vertebrata</taxon>
        <taxon>Euteleostomi</taxon>
        <taxon>Mammalia</taxon>
        <taxon>Eutheria</taxon>
        <taxon>Laurasiatheria</taxon>
        <taxon>Artiodactyla</taxon>
        <taxon>Ruminantia</taxon>
        <taxon>Pecora</taxon>
        <taxon>Bovidae</taxon>
        <taxon>Bovinae</taxon>
        <taxon>Bos</taxon>
    </lineage>
</organism>
<comment type="function">
    <text>Actins are highly conserved proteins that are involved in various types of cell motility and are ubiquitously expressed in all eukaryotic cells.</text>
</comment>
<comment type="catalytic activity">
    <reaction evidence="6">
        <text>ATP + H2O = ADP + phosphate + H(+)</text>
        <dbReference type="Rhea" id="RHEA:13065"/>
        <dbReference type="ChEBI" id="CHEBI:15377"/>
        <dbReference type="ChEBI" id="CHEBI:15378"/>
        <dbReference type="ChEBI" id="CHEBI:30616"/>
        <dbReference type="ChEBI" id="CHEBI:43474"/>
        <dbReference type="ChEBI" id="CHEBI:456216"/>
    </reaction>
</comment>
<comment type="subunit">
    <text>Polymerization of globular actin (G-actin) leads to a structural filament (F-actin) in the form of a two-stranded helix. Each actin can bind to 4 others.</text>
</comment>
<comment type="subcellular location">
    <subcellularLocation>
        <location>Cytoplasm</location>
        <location>Cytoskeleton</location>
    </subcellularLocation>
</comment>
<comment type="PTM">
    <molecule>Actin, alpha cardiac muscle 1, intermediate form</molecule>
    <text evidence="4">N-terminal cleavage of acetylated cysteine of intermediate muscle actin by ACTMAP.</text>
</comment>
<comment type="PTM">
    <text evidence="4">Oxidation of Met-46 and Met-49 by MICALs (MICAL1, MICAL2 or MICAL3) to form methionine sulfoxide promotes actin filament depolymerization. MICAL1 and MICAL2 produce the (R)-S-oxide form. The (R)-S-oxide form is reverted by MSRB1 and MSRB2, which promotes actin repolymerization.</text>
</comment>
<comment type="PTM">
    <text evidence="3">Monomethylation at Lys-86 (K86me1) regulates actin-myosin interaction and actomyosin-dependent processes. Demethylation by ALKBH4 is required for maintaining actomyosin dynamics supporting normal cleavage furrow ingression during cytokinesis and cell migration.</text>
</comment>
<comment type="PTM">
    <text evidence="3">Methylated at His-75 by SETD3.</text>
</comment>
<comment type="miscellaneous">
    <text>In vertebrates 3 main groups of actin isoforms, alpha, beta and gamma have been identified. The alpha actins are found in muscle tissues and are a major constituent of the contractile apparatus. The beta and gamma actins coexist in most cell types as components of the cytoskeleton and as mediators of internal cell motility.</text>
</comment>
<comment type="similarity">
    <text evidence="7">Belongs to the actin family.</text>
</comment>
<evidence type="ECO:0000250" key="1">
    <source>
        <dbReference type="UniProtKB" id="P62737"/>
    </source>
</evidence>
<evidence type="ECO:0000250" key="2">
    <source>
        <dbReference type="UniProtKB" id="P62739"/>
    </source>
</evidence>
<evidence type="ECO:0000250" key="3">
    <source>
        <dbReference type="UniProtKB" id="P68032"/>
    </source>
</evidence>
<evidence type="ECO:0000250" key="4">
    <source>
        <dbReference type="UniProtKB" id="P68033"/>
    </source>
</evidence>
<evidence type="ECO:0000250" key="5">
    <source>
        <dbReference type="UniProtKB" id="P68135"/>
    </source>
</evidence>
<evidence type="ECO:0000250" key="6">
    <source>
        <dbReference type="UniProtKB" id="P68137"/>
    </source>
</evidence>
<evidence type="ECO:0000305" key="7"/>
<evidence type="ECO:0007829" key="8">
    <source>
        <dbReference type="PDB" id="8DMY"/>
    </source>
</evidence>
<gene>
    <name type="primary">ACTC1</name>
    <name type="synonym">ACTC</name>
</gene>
<keyword id="KW-0002">3D-structure</keyword>
<keyword id="KW-0007">Acetylation</keyword>
<keyword id="KW-0067">ATP-binding</keyword>
<keyword id="KW-0963">Cytoplasm</keyword>
<keyword id="KW-0206">Cytoskeleton</keyword>
<keyword id="KW-0378">Hydrolase</keyword>
<keyword id="KW-0488">Methylation</keyword>
<keyword id="KW-0514">Muscle protein</keyword>
<keyword id="KW-0547">Nucleotide-binding</keyword>
<keyword id="KW-0558">Oxidation</keyword>
<keyword id="KW-1185">Reference proteome</keyword>